<name>FOLD_ACHLI</name>
<protein>
    <recommendedName>
        <fullName evidence="1">Bifunctional protein FolD</fullName>
    </recommendedName>
    <domain>
        <recommendedName>
            <fullName evidence="1">Methylenetetrahydrofolate dehydrogenase</fullName>
            <ecNumber evidence="1">1.5.1.5</ecNumber>
        </recommendedName>
    </domain>
    <domain>
        <recommendedName>
            <fullName evidence="1">Methenyltetrahydrofolate cyclohydrolase</fullName>
            <ecNumber evidence="1">3.5.4.9</ecNumber>
        </recommendedName>
    </domain>
</protein>
<proteinExistence type="inferred from homology"/>
<evidence type="ECO:0000255" key="1">
    <source>
        <dbReference type="HAMAP-Rule" id="MF_01576"/>
    </source>
</evidence>
<sequence>MLLDGRKTADILNEALRVKVQYLTKKPKLEIILIGNDEASKSYVKGKLNTASNLGMEVHINYLDEAIDQLSVEALIQKLNTDKGVHGILLQLPIPKHLDSDYLISLIDYKKDVDGFHTMNQGLLFQKKDGIRPATPLGIMMLLDFYNIPIEGKHVVIIGRSQIVGAPLSKMFLDRNATVTITHSKTKNLPSITKQADILVAAIGKPKFVTKDMVKVGAVVVDVGINRVDKKLVGDVDFEHVEPIASYITPVPKGVGPMTICALAHNLYALYLKQEKE</sequence>
<comment type="function">
    <text evidence="1">Catalyzes the oxidation of 5,10-methylenetetrahydrofolate to 5,10-methenyltetrahydrofolate and then the hydrolysis of 5,10-methenyltetrahydrofolate to 10-formyltetrahydrofolate.</text>
</comment>
<comment type="catalytic activity">
    <reaction evidence="1">
        <text>(6R)-5,10-methylene-5,6,7,8-tetrahydrofolate + NADP(+) = (6R)-5,10-methenyltetrahydrofolate + NADPH</text>
        <dbReference type="Rhea" id="RHEA:22812"/>
        <dbReference type="ChEBI" id="CHEBI:15636"/>
        <dbReference type="ChEBI" id="CHEBI:57455"/>
        <dbReference type="ChEBI" id="CHEBI:57783"/>
        <dbReference type="ChEBI" id="CHEBI:58349"/>
        <dbReference type="EC" id="1.5.1.5"/>
    </reaction>
</comment>
<comment type="catalytic activity">
    <reaction evidence="1">
        <text>(6R)-5,10-methenyltetrahydrofolate + H2O = (6R)-10-formyltetrahydrofolate + H(+)</text>
        <dbReference type="Rhea" id="RHEA:23700"/>
        <dbReference type="ChEBI" id="CHEBI:15377"/>
        <dbReference type="ChEBI" id="CHEBI:15378"/>
        <dbReference type="ChEBI" id="CHEBI:57455"/>
        <dbReference type="ChEBI" id="CHEBI:195366"/>
        <dbReference type="EC" id="3.5.4.9"/>
    </reaction>
</comment>
<comment type="pathway">
    <text evidence="1">One-carbon metabolism; tetrahydrofolate interconversion.</text>
</comment>
<comment type="subunit">
    <text evidence="1">Homodimer.</text>
</comment>
<comment type="similarity">
    <text evidence="1">Belongs to the tetrahydrofolate dehydrogenase/cyclohydrolase family.</text>
</comment>
<gene>
    <name evidence="1" type="primary">folD</name>
    <name type="ordered locus">ACL_0033</name>
</gene>
<feature type="chain" id="PRO_0000340573" description="Bifunctional protein FolD">
    <location>
        <begin position="1"/>
        <end position="277"/>
    </location>
</feature>
<feature type="binding site" evidence="1">
    <location>
        <begin position="159"/>
        <end position="161"/>
    </location>
    <ligand>
        <name>NADP(+)</name>
        <dbReference type="ChEBI" id="CHEBI:58349"/>
    </ligand>
</feature>
<feature type="binding site" evidence="1">
    <location>
        <position position="184"/>
    </location>
    <ligand>
        <name>NADP(+)</name>
        <dbReference type="ChEBI" id="CHEBI:58349"/>
    </ligand>
</feature>
<feature type="binding site" evidence="1">
    <location>
        <position position="225"/>
    </location>
    <ligand>
        <name>NADP(+)</name>
        <dbReference type="ChEBI" id="CHEBI:58349"/>
    </ligand>
</feature>
<keyword id="KW-0028">Amino-acid biosynthesis</keyword>
<keyword id="KW-0368">Histidine biosynthesis</keyword>
<keyword id="KW-0378">Hydrolase</keyword>
<keyword id="KW-0486">Methionine biosynthesis</keyword>
<keyword id="KW-0511">Multifunctional enzyme</keyword>
<keyword id="KW-0521">NADP</keyword>
<keyword id="KW-0554">One-carbon metabolism</keyword>
<keyword id="KW-0560">Oxidoreductase</keyword>
<keyword id="KW-0658">Purine biosynthesis</keyword>
<keyword id="KW-1185">Reference proteome</keyword>
<dbReference type="EC" id="1.5.1.5" evidence="1"/>
<dbReference type="EC" id="3.5.4.9" evidence="1"/>
<dbReference type="EMBL" id="CP000896">
    <property type="protein sequence ID" value="ABX80676.1"/>
    <property type="molecule type" value="Genomic_DNA"/>
</dbReference>
<dbReference type="RefSeq" id="WP_012242007.1">
    <property type="nucleotide sequence ID" value="NC_010163.1"/>
</dbReference>
<dbReference type="SMR" id="A9NE96"/>
<dbReference type="STRING" id="441768.ACL_0033"/>
<dbReference type="GeneID" id="41338237"/>
<dbReference type="KEGG" id="acl:ACL_0033"/>
<dbReference type="eggNOG" id="COG0190">
    <property type="taxonomic scope" value="Bacteria"/>
</dbReference>
<dbReference type="HOGENOM" id="CLU_034045_2_1_14"/>
<dbReference type="OrthoDB" id="9803580at2"/>
<dbReference type="UniPathway" id="UPA00193"/>
<dbReference type="Proteomes" id="UP000008558">
    <property type="component" value="Chromosome"/>
</dbReference>
<dbReference type="GO" id="GO:0005829">
    <property type="term" value="C:cytosol"/>
    <property type="evidence" value="ECO:0007669"/>
    <property type="project" value="TreeGrafter"/>
</dbReference>
<dbReference type="GO" id="GO:0004477">
    <property type="term" value="F:methenyltetrahydrofolate cyclohydrolase activity"/>
    <property type="evidence" value="ECO:0007669"/>
    <property type="project" value="UniProtKB-UniRule"/>
</dbReference>
<dbReference type="GO" id="GO:0004488">
    <property type="term" value="F:methylenetetrahydrofolate dehydrogenase (NADP+) activity"/>
    <property type="evidence" value="ECO:0007669"/>
    <property type="project" value="UniProtKB-UniRule"/>
</dbReference>
<dbReference type="GO" id="GO:0000105">
    <property type="term" value="P:L-histidine biosynthetic process"/>
    <property type="evidence" value="ECO:0007669"/>
    <property type="project" value="UniProtKB-KW"/>
</dbReference>
<dbReference type="GO" id="GO:0009086">
    <property type="term" value="P:methionine biosynthetic process"/>
    <property type="evidence" value="ECO:0007669"/>
    <property type="project" value="UniProtKB-KW"/>
</dbReference>
<dbReference type="GO" id="GO:0006164">
    <property type="term" value="P:purine nucleotide biosynthetic process"/>
    <property type="evidence" value="ECO:0007669"/>
    <property type="project" value="UniProtKB-KW"/>
</dbReference>
<dbReference type="GO" id="GO:0035999">
    <property type="term" value="P:tetrahydrofolate interconversion"/>
    <property type="evidence" value="ECO:0007669"/>
    <property type="project" value="UniProtKB-UniRule"/>
</dbReference>
<dbReference type="CDD" id="cd01080">
    <property type="entry name" value="NAD_bind_m-THF_DH_Cyclohyd"/>
    <property type="match status" value="1"/>
</dbReference>
<dbReference type="FunFam" id="3.40.50.720:FF:000094">
    <property type="entry name" value="Bifunctional protein FolD"/>
    <property type="match status" value="1"/>
</dbReference>
<dbReference type="FunFam" id="3.40.50.10860:FF:000005">
    <property type="entry name" value="C-1-tetrahydrofolate synthase, cytoplasmic, putative"/>
    <property type="match status" value="1"/>
</dbReference>
<dbReference type="Gene3D" id="3.40.50.10860">
    <property type="entry name" value="Leucine Dehydrogenase, chain A, domain 1"/>
    <property type="match status" value="1"/>
</dbReference>
<dbReference type="Gene3D" id="3.40.50.720">
    <property type="entry name" value="NAD(P)-binding Rossmann-like Domain"/>
    <property type="match status" value="1"/>
</dbReference>
<dbReference type="HAMAP" id="MF_01576">
    <property type="entry name" value="THF_DHG_CYH"/>
    <property type="match status" value="1"/>
</dbReference>
<dbReference type="InterPro" id="IPR046346">
    <property type="entry name" value="Aminoacid_DH-like_N_sf"/>
</dbReference>
<dbReference type="InterPro" id="IPR036291">
    <property type="entry name" value="NAD(P)-bd_dom_sf"/>
</dbReference>
<dbReference type="InterPro" id="IPR000672">
    <property type="entry name" value="THF_DH/CycHdrlase"/>
</dbReference>
<dbReference type="InterPro" id="IPR020630">
    <property type="entry name" value="THF_DH/CycHdrlase_cat_dom"/>
</dbReference>
<dbReference type="InterPro" id="IPR020867">
    <property type="entry name" value="THF_DH/CycHdrlase_CS"/>
</dbReference>
<dbReference type="InterPro" id="IPR020631">
    <property type="entry name" value="THF_DH/CycHdrlase_NAD-bd_dom"/>
</dbReference>
<dbReference type="PANTHER" id="PTHR48099:SF5">
    <property type="entry name" value="C-1-TETRAHYDROFOLATE SYNTHASE, CYTOPLASMIC"/>
    <property type="match status" value="1"/>
</dbReference>
<dbReference type="PANTHER" id="PTHR48099">
    <property type="entry name" value="C-1-TETRAHYDROFOLATE SYNTHASE, CYTOPLASMIC-RELATED"/>
    <property type="match status" value="1"/>
</dbReference>
<dbReference type="Pfam" id="PF00763">
    <property type="entry name" value="THF_DHG_CYH"/>
    <property type="match status" value="1"/>
</dbReference>
<dbReference type="Pfam" id="PF02882">
    <property type="entry name" value="THF_DHG_CYH_C"/>
    <property type="match status" value="1"/>
</dbReference>
<dbReference type="PRINTS" id="PR00085">
    <property type="entry name" value="THFDHDRGNASE"/>
</dbReference>
<dbReference type="SUPFAM" id="SSF53223">
    <property type="entry name" value="Aminoacid dehydrogenase-like, N-terminal domain"/>
    <property type="match status" value="1"/>
</dbReference>
<dbReference type="SUPFAM" id="SSF51735">
    <property type="entry name" value="NAD(P)-binding Rossmann-fold domains"/>
    <property type="match status" value="1"/>
</dbReference>
<dbReference type="PROSITE" id="PS00767">
    <property type="entry name" value="THF_DHG_CYH_2"/>
    <property type="match status" value="1"/>
</dbReference>
<reference key="1">
    <citation type="journal article" date="2011" name="J. Bacteriol.">
        <title>Complete genome and proteome of Acholeplasma laidlawii.</title>
        <authorList>
            <person name="Lazarev V.N."/>
            <person name="Levitskii S.A."/>
            <person name="Basovskii Y.I."/>
            <person name="Chukin M.M."/>
            <person name="Akopian T.A."/>
            <person name="Vereshchagin V.V."/>
            <person name="Kostrjukova E.S."/>
            <person name="Kovaleva G.Y."/>
            <person name="Kazanov M.D."/>
            <person name="Malko D.B."/>
            <person name="Vitreschak A.G."/>
            <person name="Sernova N.V."/>
            <person name="Gelfand M.S."/>
            <person name="Demina I.A."/>
            <person name="Serebryakova M.V."/>
            <person name="Galyamina M.A."/>
            <person name="Vtyurin N.N."/>
            <person name="Rogov S.I."/>
            <person name="Alexeev D.G."/>
            <person name="Ladygina V.G."/>
            <person name="Govorun V.M."/>
        </authorList>
    </citation>
    <scope>NUCLEOTIDE SEQUENCE [LARGE SCALE GENOMIC DNA]</scope>
    <source>
        <strain>PG-8A</strain>
    </source>
</reference>
<accession>A9NE96</accession>
<organism>
    <name type="scientific">Acholeplasma laidlawii (strain PG-8A)</name>
    <dbReference type="NCBI Taxonomy" id="441768"/>
    <lineage>
        <taxon>Bacteria</taxon>
        <taxon>Bacillati</taxon>
        <taxon>Mycoplasmatota</taxon>
        <taxon>Mollicutes</taxon>
        <taxon>Acholeplasmatales</taxon>
        <taxon>Acholeplasmataceae</taxon>
        <taxon>Acholeplasma</taxon>
    </lineage>
</organism>